<name>Y2563_STAAB</name>
<feature type="chain" id="PRO_0000299507" description="UPF0312 protein SAB2563">
    <location>
        <begin position="1"/>
        <end position="171"/>
    </location>
</feature>
<comment type="similarity">
    <text evidence="1">Belongs to the UPF0312 family.</text>
</comment>
<protein>
    <recommendedName>
        <fullName>UPF0312 protein SAB2563</fullName>
    </recommendedName>
</protein>
<dbReference type="EMBL" id="AJ938182">
    <property type="protein sequence ID" value="CAI82251.1"/>
    <property type="molecule type" value="Genomic_DNA"/>
</dbReference>
<dbReference type="RefSeq" id="WP_000181118.1">
    <property type="nucleotide sequence ID" value="NC_007622.1"/>
</dbReference>
<dbReference type="SMR" id="Q2YZA5"/>
<dbReference type="KEGG" id="sab:SAB2563"/>
<dbReference type="HOGENOM" id="CLU_071003_3_0_9"/>
<dbReference type="Gene3D" id="2.40.128.110">
    <property type="entry name" value="Lipid/polyisoprenoid-binding, YceI-like"/>
    <property type="match status" value="1"/>
</dbReference>
<dbReference type="InterPro" id="IPR007372">
    <property type="entry name" value="Lipid/polyisoprenoid-bd_YceI"/>
</dbReference>
<dbReference type="InterPro" id="IPR036761">
    <property type="entry name" value="TTHA0802/YceI-like_sf"/>
</dbReference>
<dbReference type="PANTHER" id="PTHR34406">
    <property type="entry name" value="PROTEIN YCEI"/>
    <property type="match status" value="1"/>
</dbReference>
<dbReference type="PANTHER" id="PTHR34406:SF1">
    <property type="entry name" value="PROTEIN YCEI"/>
    <property type="match status" value="1"/>
</dbReference>
<dbReference type="Pfam" id="PF04264">
    <property type="entry name" value="YceI"/>
    <property type="match status" value="1"/>
</dbReference>
<dbReference type="SMART" id="SM00867">
    <property type="entry name" value="YceI"/>
    <property type="match status" value="1"/>
</dbReference>
<dbReference type="SUPFAM" id="SSF101874">
    <property type="entry name" value="YceI-like"/>
    <property type="match status" value="1"/>
</dbReference>
<gene>
    <name type="ordered locus">SAB2563</name>
</gene>
<evidence type="ECO:0000305" key="1"/>
<sequence>MTNFTFDGAHSSLEFQIKHLMVSKVKGSFDQFDVAVEGDINDFSTLKATATIIPSSINTKNDARDNHLKSGDFFGTDEFDKITFETKSVTENKVVGDLTIKGITNEETFDVEFNGVSKNPMDGSQVTGIIVTGTINREKYGINFNQALETGGVMLGKDVKFEASAEFSISE</sequence>
<reference key="1">
    <citation type="journal article" date="2007" name="PLoS ONE">
        <title>Molecular correlates of host specialization in Staphylococcus aureus.</title>
        <authorList>
            <person name="Herron-Olson L."/>
            <person name="Fitzgerald J.R."/>
            <person name="Musser J.M."/>
            <person name="Kapur V."/>
        </authorList>
    </citation>
    <scope>NUCLEOTIDE SEQUENCE [LARGE SCALE GENOMIC DNA]</scope>
    <source>
        <strain>bovine RF122 / ET3-1</strain>
    </source>
</reference>
<proteinExistence type="inferred from homology"/>
<accession>Q2YZA5</accession>
<organism>
    <name type="scientific">Staphylococcus aureus (strain bovine RF122 / ET3-1)</name>
    <dbReference type="NCBI Taxonomy" id="273036"/>
    <lineage>
        <taxon>Bacteria</taxon>
        <taxon>Bacillati</taxon>
        <taxon>Bacillota</taxon>
        <taxon>Bacilli</taxon>
        <taxon>Bacillales</taxon>
        <taxon>Staphylococcaceae</taxon>
        <taxon>Staphylococcus</taxon>
    </lineage>
</organism>